<proteinExistence type="inferred from homology"/>
<organism>
    <name type="scientific">Chlorobaculum tepidum (strain ATCC 49652 / DSM 12025 / NBRC 103806 / TLS)</name>
    <name type="common">Chlorobium tepidum</name>
    <dbReference type="NCBI Taxonomy" id="194439"/>
    <lineage>
        <taxon>Bacteria</taxon>
        <taxon>Pseudomonadati</taxon>
        <taxon>Chlorobiota</taxon>
        <taxon>Chlorobiia</taxon>
        <taxon>Chlorobiales</taxon>
        <taxon>Chlorobiaceae</taxon>
        <taxon>Chlorobaculum</taxon>
    </lineage>
</organism>
<name>HRCA_CHLTE</name>
<dbReference type="EMBL" id="AE006470">
    <property type="protein sequence ID" value="AAM72713.1"/>
    <property type="molecule type" value="Genomic_DNA"/>
</dbReference>
<dbReference type="RefSeq" id="NP_662371.1">
    <property type="nucleotide sequence ID" value="NC_002932.3"/>
</dbReference>
<dbReference type="RefSeq" id="WP_010933152.1">
    <property type="nucleotide sequence ID" value="NC_002932.3"/>
</dbReference>
<dbReference type="SMR" id="Q8KCD6"/>
<dbReference type="STRING" id="194439.CT1486"/>
<dbReference type="EnsemblBacteria" id="AAM72713">
    <property type="protein sequence ID" value="AAM72713"/>
    <property type="gene ID" value="CT1486"/>
</dbReference>
<dbReference type="KEGG" id="cte:CT1486"/>
<dbReference type="PATRIC" id="fig|194439.7.peg.1347"/>
<dbReference type="eggNOG" id="COG1420">
    <property type="taxonomic scope" value="Bacteria"/>
</dbReference>
<dbReference type="HOGENOM" id="CLU_050019_1_0_10"/>
<dbReference type="OrthoDB" id="9783139at2"/>
<dbReference type="Proteomes" id="UP000001007">
    <property type="component" value="Chromosome"/>
</dbReference>
<dbReference type="GO" id="GO:0003677">
    <property type="term" value="F:DNA binding"/>
    <property type="evidence" value="ECO:0007669"/>
    <property type="project" value="InterPro"/>
</dbReference>
<dbReference type="GO" id="GO:0045892">
    <property type="term" value="P:negative regulation of DNA-templated transcription"/>
    <property type="evidence" value="ECO:0007669"/>
    <property type="project" value="UniProtKB-UniRule"/>
</dbReference>
<dbReference type="Gene3D" id="3.30.450.40">
    <property type="match status" value="1"/>
</dbReference>
<dbReference type="Gene3D" id="3.30.390.60">
    <property type="entry name" value="Heat-inducible transcription repressor hrca homolog, domain 3"/>
    <property type="match status" value="1"/>
</dbReference>
<dbReference type="Gene3D" id="1.10.10.10">
    <property type="entry name" value="Winged helix-like DNA-binding domain superfamily/Winged helix DNA-binding domain"/>
    <property type="match status" value="1"/>
</dbReference>
<dbReference type="HAMAP" id="MF_00081">
    <property type="entry name" value="HrcA"/>
    <property type="match status" value="1"/>
</dbReference>
<dbReference type="InterPro" id="IPR029016">
    <property type="entry name" value="GAF-like_dom_sf"/>
</dbReference>
<dbReference type="InterPro" id="IPR002571">
    <property type="entry name" value="HrcA"/>
</dbReference>
<dbReference type="InterPro" id="IPR021153">
    <property type="entry name" value="HrcA_C"/>
</dbReference>
<dbReference type="InterPro" id="IPR036388">
    <property type="entry name" value="WH-like_DNA-bd_sf"/>
</dbReference>
<dbReference type="InterPro" id="IPR036390">
    <property type="entry name" value="WH_DNA-bd_sf"/>
</dbReference>
<dbReference type="InterPro" id="IPR023120">
    <property type="entry name" value="WHTH_transcript_rep_HrcA_IDD"/>
</dbReference>
<dbReference type="NCBIfam" id="TIGR00331">
    <property type="entry name" value="hrcA"/>
    <property type="match status" value="1"/>
</dbReference>
<dbReference type="PANTHER" id="PTHR34824">
    <property type="entry name" value="HEAT-INDUCIBLE TRANSCRIPTION REPRESSOR HRCA"/>
    <property type="match status" value="1"/>
</dbReference>
<dbReference type="PANTHER" id="PTHR34824:SF1">
    <property type="entry name" value="HEAT-INDUCIBLE TRANSCRIPTION REPRESSOR HRCA"/>
    <property type="match status" value="1"/>
</dbReference>
<dbReference type="Pfam" id="PF01628">
    <property type="entry name" value="HrcA"/>
    <property type="match status" value="1"/>
</dbReference>
<dbReference type="PIRSF" id="PIRSF005485">
    <property type="entry name" value="HrcA"/>
    <property type="match status" value="1"/>
</dbReference>
<dbReference type="SUPFAM" id="SSF55781">
    <property type="entry name" value="GAF domain-like"/>
    <property type="match status" value="1"/>
</dbReference>
<dbReference type="SUPFAM" id="SSF46785">
    <property type="entry name" value="Winged helix' DNA-binding domain"/>
    <property type="match status" value="1"/>
</dbReference>
<evidence type="ECO:0000255" key="1">
    <source>
        <dbReference type="HAMAP-Rule" id="MF_00081"/>
    </source>
</evidence>
<comment type="function">
    <text evidence="1">Negative regulator of class I heat shock genes (grpE-dnaK-dnaJ and groELS operons). Prevents heat-shock induction of these operons.</text>
</comment>
<comment type="similarity">
    <text evidence="1">Belongs to the HrcA family.</text>
</comment>
<sequence>MNYRDLTLRERQVLGIIIQSYVVSAMPVGSRTIARNYNLGLSDATIRNVMADLEADGFISQPHTSAGRVPTDKGYRYYVDLIMNVSRIDEEEKRMIDDRFSNRNSELKGTSAEVLGTAARVLGSISRQLAVVLPPRLSNAVFERLDIVQLASSRIMVVIAIQSLFVKTIVMELNAEISRQKIDAVVDVLNERLPGLTLEEIRSTIAQRLSDFKGSEELMNSIVSSADTLFDESSILEQLYVSGTENIVDQPEFKQPEKVRDIITMIEDKFGMARLVDNAVPSALRQVSECEVAISIGTENRTGKAADLTIVSSPYFAGKMIGRVGVMGPKRMNYEHAVRVVNYMAGCLSEALSGNN</sequence>
<protein>
    <recommendedName>
        <fullName evidence="1">Heat-inducible transcription repressor HrcA</fullName>
    </recommendedName>
</protein>
<keyword id="KW-1185">Reference proteome</keyword>
<keyword id="KW-0678">Repressor</keyword>
<keyword id="KW-0346">Stress response</keyword>
<keyword id="KW-0804">Transcription</keyword>
<keyword id="KW-0805">Transcription regulation</keyword>
<reference key="1">
    <citation type="journal article" date="2002" name="Proc. Natl. Acad. Sci. U.S.A.">
        <title>The complete genome sequence of Chlorobium tepidum TLS, a photosynthetic, anaerobic, green-sulfur bacterium.</title>
        <authorList>
            <person name="Eisen J.A."/>
            <person name="Nelson K.E."/>
            <person name="Paulsen I.T."/>
            <person name="Heidelberg J.F."/>
            <person name="Wu M."/>
            <person name="Dodson R.J."/>
            <person name="DeBoy R.T."/>
            <person name="Gwinn M.L."/>
            <person name="Nelson W.C."/>
            <person name="Haft D.H."/>
            <person name="Hickey E.K."/>
            <person name="Peterson J.D."/>
            <person name="Durkin A.S."/>
            <person name="Kolonay J.F."/>
            <person name="Yang F."/>
            <person name="Holt I.E."/>
            <person name="Umayam L.A."/>
            <person name="Mason T.M."/>
            <person name="Brenner M."/>
            <person name="Shea T.P."/>
            <person name="Parksey D.S."/>
            <person name="Nierman W.C."/>
            <person name="Feldblyum T.V."/>
            <person name="Hansen C.L."/>
            <person name="Craven M.B."/>
            <person name="Radune D."/>
            <person name="Vamathevan J.J."/>
            <person name="Khouri H.M."/>
            <person name="White O."/>
            <person name="Gruber T.M."/>
            <person name="Ketchum K.A."/>
            <person name="Venter J.C."/>
            <person name="Tettelin H."/>
            <person name="Bryant D.A."/>
            <person name="Fraser C.M."/>
        </authorList>
    </citation>
    <scope>NUCLEOTIDE SEQUENCE [LARGE SCALE GENOMIC DNA]</scope>
    <source>
        <strain>ATCC 49652 / DSM 12025 / NBRC 103806 / TLS</strain>
    </source>
</reference>
<gene>
    <name evidence="1" type="primary">hrcA</name>
    <name type="ordered locus">CT1486</name>
</gene>
<accession>Q8KCD6</accession>
<feature type="chain" id="PRO_0000182468" description="Heat-inducible transcription repressor HrcA">
    <location>
        <begin position="1"/>
        <end position="356"/>
    </location>
</feature>